<evidence type="ECO:0000255" key="1">
    <source>
        <dbReference type="HAMAP-Rule" id="MF_01719"/>
    </source>
</evidence>
<evidence type="ECO:0000305" key="2"/>
<comment type="function">
    <text evidence="1">Part of the ABC transporter complex MetNIQ involved in methionine import. Responsible for energy coupling to the transport system.</text>
</comment>
<comment type="catalytic activity">
    <reaction evidence="1">
        <text>L-methionine(out) + ATP + H2O = L-methionine(in) + ADP + phosphate + H(+)</text>
        <dbReference type="Rhea" id="RHEA:29779"/>
        <dbReference type="ChEBI" id="CHEBI:15377"/>
        <dbReference type="ChEBI" id="CHEBI:15378"/>
        <dbReference type="ChEBI" id="CHEBI:30616"/>
        <dbReference type="ChEBI" id="CHEBI:43474"/>
        <dbReference type="ChEBI" id="CHEBI:57844"/>
        <dbReference type="ChEBI" id="CHEBI:456216"/>
        <dbReference type="EC" id="7.4.2.11"/>
    </reaction>
</comment>
<comment type="catalytic activity">
    <reaction evidence="1">
        <text>D-methionine(out) + ATP + H2O = D-methionine(in) + ADP + phosphate + H(+)</text>
        <dbReference type="Rhea" id="RHEA:29767"/>
        <dbReference type="ChEBI" id="CHEBI:15377"/>
        <dbReference type="ChEBI" id="CHEBI:15378"/>
        <dbReference type="ChEBI" id="CHEBI:30616"/>
        <dbReference type="ChEBI" id="CHEBI:43474"/>
        <dbReference type="ChEBI" id="CHEBI:57932"/>
        <dbReference type="ChEBI" id="CHEBI:456216"/>
        <dbReference type="EC" id="7.4.2.11"/>
    </reaction>
</comment>
<comment type="subunit">
    <text evidence="1">The complex is composed of two ATP-binding proteins (MetN), two transmembrane proteins (MetI) and a solute-binding protein (MetQ).</text>
</comment>
<comment type="subcellular location">
    <subcellularLocation>
        <location evidence="1">Cell inner membrane</location>
        <topology evidence="1">Peripheral membrane protein</topology>
    </subcellularLocation>
</comment>
<comment type="similarity">
    <text evidence="1">Belongs to the ABC transporter superfamily. Methionine importer (TC 3.A.1.24) family.</text>
</comment>
<comment type="sequence caution" evidence="2">
    <conflict type="erroneous initiation">
        <sequence resource="EMBL-CDS" id="AAU46552"/>
    </conflict>
</comment>
<gene>
    <name evidence="1" type="primary">metN2</name>
    <name type="ordered locus">BMAA1439</name>
</gene>
<reference key="1">
    <citation type="journal article" date="2004" name="Proc. Natl. Acad. Sci. U.S.A.">
        <title>Structural flexibility in the Burkholderia mallei genome.</title>
        <authorList>
            <person name="Nierman W.C."/>
            <person name="DeShazer D."/>
            <person name="Kim H.S."/>
            <person name="Tettelin H."/>
            <person name="Nelson K.E."/>
            <person name="Feldblyum T.V."/>
            <person name="Ulrich R.L."/>
            <person name="Ronning C.M."/>
            <person name="Brinkac L.M."/>
            <person name="Daugherty S.C."/>
            <person name="Davidsen T.D."/>
            <person name="DeBoy R.T."/>
            <person name="Dimitrov G."/>
            <person name="Dodson R.J."/>
            <person name="Durkin A.S."/>
            <person name="Gwinn M.L."/>
            <person name="Haft D.H."/>
            <person name="Khouri H.M."/>
            <person name="Kolonay J.F."/>
            <person name="Madupu R."/>
            <person name="Mohammoud Y."/>
            <person name="Nelson W.C."/>
            <person name="Radune D."/>
            <person name="Romero C.M."/>
            <person name="Sarria S."/>
            <person name="Selengut J."/>
            <person name="Shamblin C."/>
            <person name="Sullivan S.A."/>
            <person name="White O."/>
            <person name="Yu Y."/>
            <person name="Zafar N."/>
            <person name="Zhou L."/>
            <person name="Fraser C.M."/>
        </authorList>
    </citation>
    <scope>NUCLEOTIDE SEQUENCE [LARGE SCALE GENOMIC DNA]</scope>
    <source>
        <strain>ATCC 23344</strain>
    </source>
</reference>
<proteinExistence type="inferred from homology"/>
<accession>Q62B84</accession>
<protein>
    <recommendedName>
        <fullName evidence="1">Methionine import ATP-binding protein MetN 2</fullName>
        <ecNumber evidence="1">7.4.2.11</ecNumber>
    </recommendedName>
</protein>
<sequence length="396" mass="41028">MAQLLDSPGFIERSAAVPHKAAAAPATRDAAAPAAVPGAAVSFELVGKVFDGPRGPAAALREVTLDIARGGVFGVIGRSGAGKSTLLRLVNGLERPTSGAVRVNGVDVGTLDERGLVALRRRIGMVFQHFNLLSAKTVAQNIGLPLKIAGVPKAERARKVDALLDLVGLAAKRDAYPASLSGGQKQRVGIARALVHDPALLLCDEATSALDPETTQSILALLADINRRLGLTIMLITHEMEVIRAVCDTVAVVEQGEVVETGPVWRVFGDPRHGATRALLRTLAHDLPADLAAHVRPLDGAAPLPCGAQLLLDVRYTGASGGEPDLGALTAALARNVGDAVHFVHGGLDRIQGRVQGRLVIAASLAARGAAGPDRIAAALAAARRHANRVEVLGYV</sequence>
<keyword id="KW-0029">Amino-acid transport</keyword>
<keyword id="KW-0067">ATP-binding</keyword>
<keyword id="KW-0997">Cell inner membrane</keyword>
<keyword id="KW-1003">Cell membrane</keyword>
<keyword id="KW-0472">Membrane</keyword>
<keyword id="KW-0547">Nucleotide-binding</keyword>
<keyword id="KW-1185">Reference proteome</keyword>
<keyword id="KW-1278">Translocase</keyword>
<keyword id="KW-0813">Transport</keyword>
<dbReference type="EC" id="7.4.2.11" evidence="1"/>
<dbReference type="EMBL" id="CP000011">
    <property type="protein sequence ID" value="AAU46552.1"/>
    <property type="status" value="ALT_INIT"/>
    <property type="molecule type" value="Genomic_DNA"/>
</dbReference>
<dbReference type="RefSeq" id="YP_106044.1">
    <property type="nucleotide sequence ID" value="NC_006349.2"/>
</dbReference>
<dbReference type="SMR" id="Q62B84"/>
<dbReference type="KEGG" id="bma:BMAA1439"/>
<dbReference type="PATRIC" id="fig|243160.12.peg.5009"/>
<dbReference type="eggNOG" id="COG1135">
    <property type="taxonomic scope" value="Bacteria"/>
</dbReference>
<dbReference type="HOGENOM" id="CLU_000604_1_3_4"/>
<dbReference type="Proteomes" id="UP000006693">
    <property type="component" value="Chromosome 2"/>
</dbReference>
<dbReference type="GO" id="GO:0005886">
    <property type="term" value="C:plasma membrane"/>
    <property type="evidence" value="ECO:0007669"/>
    <property type="project" value="UniProtKB-SubCell"/>
</dbReference>
<dbReference type="GO" id="GO:0033232">
    <property type="term" value="F:ABC-type D-methionine transporter activity"/>
    <property type="evidence" value="ECO:0007669"/>
    <property type="project" value="UniProtKB-EC"/>
</dbReference>
<dbReference type="GO" id="GO:0005524">
    <property type="term" value="F:ATP binding"/>
    <property type="evidence" value="ECO:0007669"/>
    <property type="project" value="UniProtKB-KW"/>
</dbReference>
<dbReference type="GO" id="GO:0016887">
    <property type="term" value="F:ATP hydrolysis activity"/>
    <property type="evidence" value="ECO:0007669"/>
    <property type="project" value="InterPro"/>
</dbReference>
<dbReference type="CDD" id="cd03258">
    <property type="entry name" value="ABC_MetN_methionine_transporter"/>
    <property type="match status" value="1"/>
</dbReference>
<dbReference type="FunFam" id="3.40.50.300:FF:000056">
    <property type="entry name" value="Cell division ATP-binding protein FtsE"/>
    <property type="match status" value="1"/>
</dbReference>
<dbReference type="Gene3D" id="3.40.50.300">
    <property type="entry name" value="P-loop containing nucleotide triphosphate hydrolases"/>
    <property type="match status" value="1"/>
</dbReference>
<dbReference type="InterPro" id="IPR003593">
    <property type="entry name" value="AAA+_ATPase"/>
</dbReference>
<dbReference type="InterPro" id="IPR003439">
    <property type="entry name" value="ABC_transporter-like_ATP-bd"/>
</dbReference>
<dbReference type="InterPro" id="IPR017871">
    <property type="entry name" value="ABC_transporter-like_CS"/>
</dbReference>
<dbReference type="InterPro" id="IPR045865">
    <property type="entry name" value="ACT-like_dom_sf"/>
</dbReference>
<dbReference type="InterPro" id="IPR041701">
    <property type="entry name" value="MetN_ABC"/>
</dbReference>
<dbReference type="InterPro" id="IPR050086">
    <property type="entry name" value="MetN_ABC_transporter-like"/>
</dbReference>
<dbReference type="InterPro" id="IPR018449">
    <property type="entry name" value="NIL_domain"/>
</dbReference>
<dbReference type="InterPro" id="IPR027417">
    <property type="entry name" value="P-loop_NTPase"/>
</dbReference>
<dbReference type="PANTHER" id="PTHR43166">
    <property type="entry name" value="AMINO ACID IMPORT ATP-BINDING PROTEIN"/>
    <property type="match status" value="1"/>
</dbReference>
<dbReference type="PANTHER" id="PTHR43166:SF30">
    <property type="entry name" value="METHIONINE IMPORT ATP-BINDING PROTEIN METN"/>
    <property type="match status" value="1"/>
</dbReference>
<dbReference type="Pfam" id="PF00005">
    <property type="entry name" value="ABC_tran"/>
    <property type="match status" value="1"/>
</dbReference>
<dbReference type="Pfam" id="PF09383">
    <property type="entry name" value="NIL"/>
    <property type="match status" value="1"/>
</dbReference>
<dbReference type="SMART" id="SM00382">
    <property type="entry name" value="AAA"/>
    <property type="match status" value="1"/>
</dbReference>
<dbReference type="SMART" id="SM00930">
    <property type="entry name" value="NIL"/>
    <property type="match status" value="1"/>
</dbReference>
<dbReference type="SUPFAM" id="SSF55021">
    <property type="entry name" value="ACT-like"/>
    <property type="match status" value="1"/>
</dbReference>
<dbReference type="SUPFAM" id="SSF52540">
    <property type="entry name" value="P-loop containing nucleoside triphosphate hydrolases"/>
    <property type="match status" value="1"/>
</dbReference>
<dbReference type="PROSITE" id="PS00211">
    <property type="entry name" value="ABC_TRANSPORTER_1"/>
    <property type="match status" value="1"/>
</dbReference>
<dbReference type="PROSITE" id="PS50893">
    <property type="entry name" value="ABC_TRANSPORTER_2"/>
    <property type="match status" value="1"/>
</dbReference>
<dbReference type="PROSITE" id="PS51264">
    <property type="entry name" value="METN"/>
    <property type="match status" value="1"/>
</dbReference>
<organism>
    <name type="scientific">Burkholderia mallei (strain ATCC 23344)</name>
    <dbReference type="NCBI Taxonomy" id="243160"/>
    <lineage>
        <taxon>Bacteria</taxon>
        <taxon>Pseudomonadati</taxon>
        <taxon>Pseudomonadota</taxon>
        <taxon>Betaproteobacteria</taxon>
        <taxon>Burkholderiales</taxon>
        <taxon>Burkholderiaceae</taxon>
        <taxon>Burkholderia</taxon>
        <taxon>pseudomallei group</taxon>
    </lineage>
</organism>
<feature type="chain" id="PRO_0000270264" description="Methionine import ATP-binding protein MetN 2">
    <location>
        <begin position="1"/>
        <end position="396"/>
    </location>
</feature>
<feature type="domain" description="ABC transporter" evidence="1">
    <location>
        <begin position="41"/>
        <end position="280"/>
    </location>
</feature>
<feature type="binding site" evidence="1">
    <location>
        <begin position="77"/>
        <end position="84"/>
    </location>
    <ligand>
        <name>ATP</name>
        <dbReference type="ChEBI" id="CHEBI:30616"/>
    </ligand>
</feature>
<name>METN2_BURMA</name>